<name>NEUS_MOUSE</name>
<evidence type="ECO:0000250" key="1">
    <source>
        <dbReference type="UniProtKB" id="Q90935"/>
    </source>
</evidence>
<evidence type="ECO:0000250" key="2">
    <source>
        <dbReference type="UniProtKB" id="Q99574"/>
    </source>
</evidence>
<evidence type="ECO:0000255" key="3"/>
<evidence type="ECO:0000269" key="4">
    <source>
    </source>
</evidence>
<evidence type="ECO:0000269" key="5">
    <source>
    </source>
</evidence>
<evidence type="ECO:0000269" key="6">
    <source>
    </source>
</evidence>
<evidence type="ECO:0000305" key="7"/>
<evidence type="ECO:0000305" key="8">
    <source>
    </source>
</evidence>
<evidence type="ECO:0007829" key="9">
    <source>
        <dbReference type="PDB" id="1JJO"/>
    </source>
</evidence>
<reference key="1">
    <citation type="journal article" date="1997" name="J. Neurosci.">
        <title>Expression of neuroserpin, an inhibitor of tissue plasminogen activator, in the developing and adult nervous system of the mouse.</title>
        <authorList>
            <person name="Krueger S.R."/>
            <person name="Ghisu G.-P."/>
            <person name="Cinelli P."/>
            <person name="Gschwend T.P."/>
            <person name="Osterwalder T."/>
            <person name="Wolfer D.P."/>
            <person name="Sonderegger P."/>
        </authorList>
    </citation>
    <scope>NUCLEOTIDE SEQUENCE [MRNA]</scope>
    <scope>FUNCTION</scope>
    <scope>TISSUE SPECIFICITY</scope>
    <source>
        <strain>BALB/cJ</strain>
        <tissue>Brain</tissue>
    </source>
</reference>
<reference key="2">
    <citation type="journal article" date="2005" name="Science">
        <title>The transcriptional landscape of the mammalian genome.</title>
        <authorList>
            <person name="Carninci P."/>
            <person name="Kasukawa T."/>
            <person name="Katayama S."/>
            <person name="Gough J."/>
            <person name="Frith M.C."/>
            <person name="Maeda N."/>
            <person name="Oyama R."/>
            <person name="Ravasi T."/>
            <person name="Lenhard B."/>
            <person name="Wells C."/>
            <person name="Kodzius R."/>
            <person name="Shimokawa K."/>
            <person name="Bajic V.B."/>
            <person name="Brenner S.E."/>
            <person name="Batalov S."/>
            <person name="Forrest A.R."/>
            <person name="Zavolan M."/>
            <person name="Davis M.J."/>
            <person name="Wilming L.G."/>
            <person name="Aidinis V."/>
            <person name="Allen J.E."/>
            <person name="Ambesi-Impiombato A."/>
            <person name="Apweiler R."/>
            <person name="Aturaliya R.N."/>
            <person name="Bailey T.L."/>
            <person name="Bansal M."/>
            <person name="Baxter L."/>
            <person name="Beisel K.W."/>
            <person name="Bersano T."/>
            <person name="Bono H."/>
            <person name="Chalk A.M."/>
            <person name="Chiu K.P."/>
            <person name="Choudhary V."/>
            <person name="Christoffels A."/>
            <person name="Clutterbuck D.R."/>
            <person name="Crowe M.L."/>
            <person name="Dalla E."/>
            <person name="Dalrymple B.P."/>
            <person name="de Bono B."/>
            <person name="Della Gatta G."/>
            <person name="di Bernardo D."/>
            <person name="Down T."/>
            <person name="Engstrom P."/>
            <person name="Fagiolini M."/>
            <person name="Faulkner G."/>
            <person name="Fletcher C.F."/>
            <person name="Fukushima T."/>
            <person name="Furuno M."/>
            <person name="Futaki S."/>
            <person name="Gariboldi M."/>
            <person name="Georgii-Hemming P."/>
            <person name="Gingeras T.R."/>
            <person name="Gojobori T."/>
            <person name="Green R.E."/>
            <person name="Gustincich S."/>
            <person name="Harbers M."/>
            <person name="Hayashi Y."/>
            <person name="Hensch T.K."/>
            <person name="Hirokawa N."/>
            <person name="Hill D."/>
            <person name="Huminiecki L."/>
            <person name="Iacono M."/>
            <person name="Ikeo K."/>
            <person name="Iwama A."/>
            <person name="Ishikawa T."/>
            <person name="Jakt M."/>
            <person name="Kanapin A."/>
            <person name="Katoh M."/>
            <person name="Kawasawa Y."/>
            <person name="Kelso J."/>
            <person name="Kitamura H."/>
            <person name="Kitano H."/>
            <person name="Kollias G."/>
            <person name="Krishnan S.P."/>
            <person name="Kruger A."/>
            <person name="Kummerfeld S.K."/>
            <person name="Kurochkin I.V."/>
            <person name="Lareau L.F."/>
            <person name="Lazarevic D."/>
            <person name="Lipovich L."/>
            <person name="Liu J."/>
            <person name="Liuni S."/>
            <person name="McWilliam S."/>
            <person name="Madan Babu M."/>
            <person name="Madera M."/>
            <person name="Marchionni L."/>
            <person name="Matsuda H."/>
            <person name="Matsuzawa S."/>
            <person name="Miki H."/>
            <person name="Mignone F."/>
            <person name="Miyake S."/>
            <person name="Morris K."/>
            <person name="Mottagui-Tabar S."/>
            <person name="Mulder N."/>
            <person name="Nakano N."/>
            <person name="Nakauchi H."/>
            <person name="Ng P."/>
            <person name="Nilsson R."/>
            <person name="Nishiguchi S."/>
            <person name="Nishikawa S."/>
            <person name="Nori F."/>
            <person name="Ohara O."/>
            <person name="Okazaki Y."/>
            <person name="Orlando V."/>
            <person name="Pang K.C."/>
            <person name="Pavan W.J."/>
            <person name="Pavesi G."/>
            <person name="Pesole G."/>
            <person name="Petrovsky N."/>
            <person name="Piazza S."/>
            <person name="Reed J."/>
            <person name="Reid J.F."/>
            <person name="Ring B.Z."/>
            <person name="Ringwald M."/>
            <person name="Rost B."/>
            <person name="Ruan Y."/>
            <person name="Salzberg S.L."/>
            <person name="Sandelin A."/>
            <person name="Schneider C."/>
            <person name="Schoenbach C."/>
            <person name="Sekiguchi K."/>
            <person name="Semple C.A."/>
            <person name="Seno S."/>
            <person name="Sessa L."/>
            <person name="Sheng Y."/>
            <person name="Shibata Y."/>
            <person name="Shimada H."/>
            <person name="Shimada K."/>
            <person name="Silva D."/>
            <person name="Sinclair B."/>
            <person name="Sperling S."/>
            <person name="Stupka E."/>
            <person name="Sugiura K."/>
            <person name="Sultana R."/>
            <person name="Takenaka Y."/>
            <person name="Taki K."/>
            <person name="Tammoja K."/>
            <person name="Tan S.L."/>
            <person name="Tang S."/>
            <person name="Taylor M.S."/>
            <person name="Tegner J."/>
            <person name="Teichmann S.A."/>
            <person name="Ueda H.R."/>
            <person name="van Nimwegen E."/>
            <person name="Verardo R."/>
            <person name="Wei C.L."/>
            <person name="Yagi K."/>
            <person name="Yamanishi H."/>
            <person name="Zabarovsky E."/>
            <person name="Zhu S."/>
            <person name="Zimmer A."/>
            <person name="Hide W."/>
            <person name="Bult C."/>
            <person name="Grimmond S.M."/>
            <person name="Teasdale R.D."/>
            <person name="Liu E.T."/>
            <person name="Brusic V."/>
            <person name="Quackenbush J."/>
            <person name="Wahlestedt C."/>
            <person name="Mattick J.S."/>
            <person name="Hume D.A."/>
            <person name="Kai C."/>
            <person name="Sasaki D."/>
            <person name="Tomaru Y."/>
            <person name="Fukuda S."/>
            <person name="Kanamori-Katayama M."/>
            <person name="Suzuki M."/>
            <person name="Aoki J."/>
            <person name="Arakawa T."/>
            <person name="Iida J."/>
            <person name="Imamura K."/>
            <person name="Itoh M."/>
            <person name="Kato T."/>
            <person name="Kawaji H."/>
            <person name="Kawagashira N."/>
            <person name="Kawashima T."/>
            <person name="Kojima M."/>
            <person name="Kondo S."/>
            <person name="Konno H."/>
            <person name="Nakano K."/>
            <person name="Ninomiya N."/>
            <person name="Nishio T."/>
            <person name="Okada M."/>
            <person name="Plessy C."/>
            <person name="Shibata K."/>
            <person name="Shiraki T."/>
            <person name="Suzuki S."/>
            <person name="Tagami M."/>
            <person name="Waki K."/>
            <person name="Watahiki A."/>
            <person name="Okamura-Oho Y."/>
            <person name="Suzuki H."/>
            <person name="Kawai J."/>
            <person name="Hayashizaki Y."/>
        </authorList>
    </citation>
    <scope>NUCLEOTIDE SEQUENCE [LARGE SCALE MRNA]</scope>
    <source>
        <strain>C57BL/6J</strain>
        <tissue>Olfactory bulb</tissue>
        <tissue>Spinal ganglion</tissue>
    </source>
</reference>
<reference key="3">
    <citation type="journal article" date="2004" name="Genome Res.">
        <title>The status, quality, and expansion of the NIH full-length cDNA project: the Mammalian Gene Collection (MGC).</title>
        <authorList>
            <consortium name="The MGC Project Team"/>
        </authorList>
    </citation>
    <scope>NUCLEOTIDE SEQUENCE [LARGE SCALE MRNA]</scope>
</reference>
<reference key="4">
    <citation type="journal article" date="1998" name="Gene">
        <title>Structure of the mouse gene for the serine protease inhibitor neuroserpin (PI12).</title>
        <authorList>
            <person name="Berger P."/>
            <person name="Kozlov S.V."/>
            <person name="Krueger S.R."/>
            <person name="Sonderegger P."/>
        </authorList>
    </citation>
    <scope>GENE STRUCTURE</scope>
</reference>
<reference key="5">
    <citation type="journal article" date="2007" name="Biochem. J.">
        <title>Identification of a novel targeting sequence for regulated secretion in the serine protease inhibitor neuroserpin.</title>
        <authorList>
            <person name="Ishigami S."/>
            <person name="Sandkvist M."/>
            <person name="Tsui F."/>
            <person name="Moore E."/>
            <person name="Coleman T.A."/>
            <person name="Lawrence D.A."/>
        </authorList>
    </citation>
    <scope>SUBCELLULAR LOCATION</scope>
    <scope>TISSUE SPECIFICITY</scope>
</reference>
<reference key="6">
    <citation type="journal article" date="2001" name="FEBS Lett.">
        <title>Crystal structure of neuroserpin: a neuronal serpin involved in a conformational disease.</title>
        <authorList>
            <person name="Briand C."/>
            <person name="Kozlov S.V."/>
            <person name="Sonderegger P."/>
            <person name="Gruetter M.G."/>
        </authorList>
    </citation>
    <scope>X-RAY CRYSTALLOGRAPHY (3.06 ANGSTROMS)</scope>
    <scope>FUNCTION</scope>
    <scope>REACTIVE BOND</scope>
</reference>
<sequence length="410" mass="46348">MTYLELLALLALQSVVTGATFPDETITEWSVNMYNHLRGTGEDENILFSPLSIALAMGMMELGAQGSTRKEIRHSMGYEGLKGGEEFSFLRDFSNMASAEENQYVMKLANSLFVQNGFHVNEEFLQMLKMYFNAEVNHVDFSQNVAVANSINKWVENYTNSLLKDLVSPEDFDGVTNLALINAVYFKGNWKSQFRPENTRTFSFTKDDESEVQIPMMYQQGEFYYGEFSDGSNEAGGIYQVLEIPYEGDEISMMLALSRQEVPLATLEPLLKAQLIEEWANSVKKQKVEVYLPRFTVEQEIDLKDILKALGVTEIFIKDANLTAMSDKKELFLSKAVHKSCIEVNEEGSEAAAASGMIAISRMAVLYPQVIVDHPFLYLIRNRKSGIILFMGRVMNPETMNTSGHDFEEL</sequence>
<comment type="function">
    <text evidence="4 6 7">Serine protease inhibitor that inhibits plasminogen activators and plasmin but not thrombin (PubMed:11557034, PubMed:9364046). May be involved in the formation or reorganization of synaptic connections as well as for synaptic plasticity in the adult nervous system. May protect neurons from cell damage by tissue-type plasminogen activator (Probable).</text>
</comment>
<comment type="subcellular location">
    <subcellularLocation>
        <location evidence="1">Secreted</location>
    </subcellularLocation>
    <subcellularLocation>
        <location evidence="5">Cytoplasmic vesicle</location>
        <location evidence="5">Secretory vesicle lumen</location>
    </subcellularLocation>
    <subcellularLocation>
        <location evidence="5">Perikaryon</location>
    </subcellularLocation>
</comment>
<comment type="tissue specificity">
    <text evidence="5 6">Detected in neurons in embryonic brain cortex (at protein level) (PubMed:17040209). During embryonic development mostly expressed in CNS (PubMed:9364046). In adult expressed in brain and much less in spinal cord, heart, kidney and testis (PubMed:9364046).</text>
</comment>
<comment type="similarity">
    <text evidence="7">Belongs to the serpin family.</text>
</comment>
<accession>O35684</accession>
<accession>Q543F7</accession>
<accession>Q922U6</accession>
<dbReference type="EMBL" id="AJ001700">
    <property type="protein sequence ID" value="CAA04939.1"/>
    <property type="molecule type" value="mRNA"/>
</dbReference>
<dbReference type="EMBL" id="AK032152">
    <property type="protein sequence ID" value="BAC27727.1"/>
    <property type="molecule type" value="mRNA"/>
</dbReference>
<dbReference type="EMBL" id="AK051756">
    <property type="protein sequence ID" value="BAC34756.1"/>
    <property type="molecule type" value="mRNA"/>
</dbReference>
<dbReference type="EMBL" id="BC006776">
    <property type="protein sequence ID" value="AAH06776.1"/>
    <property type="molecule type" value="mRNA"/>
</dbReference>
<dbReference type="CCDS" id="CCDS17415.1"/>
<dbReference type="RefSeq" id="NP_033276.1">
    <property type="nucleotide sequence ID" value="NM_009250.3"/>
</dbReference>
<dbReference type="PDB" id="1JJO">
    <property type="method" value="X-ray"/>
    <property type="resolution" value="3.06 A"/>
    <property type="chains" value="A/B=25-64, C/D=101-361, E/F=367-397"/>
</dbReference>
<dbReference type="PDBsum" id="1JJO"/>
<dbReference type="SMR" id="O35684"/>
<dbReference type="BioGRID" id="203439">
    <property type="interactions" value="1"/>
</dbReference>
<dbReference type="FunCoup" id="O35684">
    <property type="interactions" value="192"/>
</dbReference>
<dbReference type="STRING" id="10090.ENSMUSP00000029423"/>
<dbReference type="MEROPS" id="I04.025"/>
<dbReference type="GlyConnect" id="2558">
    <property type="glycosylation" value="3 N-Linked glycans (1 site)"/>
</dbReference>
<dbReference type="GlyCosmos" id="O35684">
    <property type="glycosylation" value="3 sites, 3 glycans"/>
</dbReference>
<dbReference type="GlyGen" id="O35684">
    <property type="glycosylation" value="4 sites, 5 N-linked glycans (2 sites)"/>
</dbReference>
<dbReference type="iPTMnet" id="O35684"/>
<dbReference type="PhosphoSitePlus" id="O35684"/>
<dbReference type="PaxDb" id="10090-ENSMUSP00000029423"/>
<dbReference type="PeptideAtlas" id="O35684"/>
<dbReference type="ProteomicsDB" id="252954"/>
<dbReference type="Antibodypedia" id="987">
    <property type="antibodies" value="469 antibodies from 38 providers"/>
</dbReference>
<dbReference type="DNASU" id="20713"/>
<dbReference type="Ensembl" id="ENSMUST00000029423.9">
    <property type="protein sequence ID" value="ENSMUSP00000029423.9"/>
    <property type="gene ID" value="ENSMUSG00000027834.16"/>
</dbReference>
<dbReference type="GeneID" id="20713"/>
<dbReference type="KEGG" id="mmu:20713"/>
<dbReference type="UCSC" id="uc008pne.2">
    <property type="organism name" value="mouse"/>
</dbReference>
<dbReference type="AGR" id="MGI:1194506"/>
<dbReference type="CTD" id="5274"/>
<dbReference type="MGI" id="MGI:1194506">
    <property type="gene designation" value="Serpini1"/>
</dbReference>
<dbReference type="VEuPathDB" id="HostDB:ENSMUSG00000027834"/>
<dbReference type="eggNOG" id="KOG2392">
    <property type="taxonomic scope" value="Eukaryota"/>
</dbReference>
<dbReference type="GeneTree" id="ENSGT00940000158168"/>
<dbReference type="HOGENOM" id="CLU_023330_0_4_1"/>
<dbReference type="InParanoid" id="O35684"/>
<dbReference type="OMA" id="IQNGFHV"/>
<dbReference type="OrthoDB" id="9518664at2759"/>
<dbReference type="PhylomeDB" id="O35684"/>
<dbReference type="TreeFam" id="TF352620"/>
<dbReference type="BioGRID-ORCS" id="20713">
    <property type="hits" value="1 hit in 77 CRISPR screens"/>
</dbReference>
<dbReference type="ChiTaRS" id="Serpini1">
    <property type="organism name" value="mouse"/>
</dbReference>
<dbReference type="EvolutionaryTrace" id="O35684"/>
<dbReference type="PRO" id="PR:O35684"/>
<dbReference type="Proteomes" id="UP000000589">
    <property type="component" value="Chromosome 3"/>
</dbReference>
<dbReference type="RNAct" id="O35684">
    <property type="molecule type" value="protein"/>
</dbReference>
<dbReference type="Bgee" id="ENSMUSG00000027834">
    <property type="expression patterns" value="Expressed in retrosplenial region and 211 other cell types or tissues"/>
</dbReference>
<dbReference type="ExpressionAtlas" id="O35684">
    <property type="expression patterns" value="baseline and differential"/>
</dbReference>
<dbReference type="GO" id="GO:0005615">
    <property type="term" value="C:extracellular space"/>
    <property type="evidence" value="ECO:0007005"/>
    <property type="project" value="BHF-UCL"/>
</dbReference>
<dbReference type="GO" id="GO:0043025">
    <property type="term" value="C:neuronal cell body"/>
    <property type="evidence" value="ECO:0000314"/>
    <property type="project" value="UniProtKB"/>
</dbReference>
<dbReference type="GO" id="GO:0043204">
    <property type="term" value="C:perikaryon"/>
    <property type="evidence" value="ECO:0007669"/>
    <property type="project" value="UniProtKB-SubCell"/>
</dbReference>
<dbReference type="GO" id="GO:0034774">
    <property type="term" value="C:secretory granule lumen"/>
    <property type="evidence" value="ECO:0000314"/>
    <property type="project" value="UniProtKB"/>
</dbReference>
<dbReference type="GO" id="GO:0004867">
    <property type="term" value="F:serine-type endopeptidase inhibitor activity"/>
    <property type="evidence" value="ECO:0007669"/>
    <property type="project" value="UniProtKB-KW"/>
</dbReference>
<dbReference type="CDD" id="cd02048">
    <property type="entry name" value="serpinI1_NSP"/>
    <property type="match status" value="1"/>
</dbReference>
<dbReference type="FunFam" id="2.10.310.10:FF:000001">
    <property type="entry name" value="Serpin family A member 1"/>
    <property type="match status" value="1"/>
</dbReference>
<dbReference type="FunFam" id="3.30.497.10:FF:000005">
    <property type="entry name" value="serpin I2 isoform X1"/>
    <property type="match status" value="1"/>
</dbReference>
<dbReference type="Gene3D" id="2.30.39.10">
    <property type="entry name" value="Alpha-1-antitrypsin, domain 1"/>
    <property type="match status" value="1"/>
</dbReference>
<dbReference type="Gene3D" id="3.30.497.10">
    <property type="entry name" value="Antithrombin, subunit I, domain 2"/>
    <property type="match status" value="1"/>
</dbReference>
<dbReference type="InterPro" id="IPR023795">
    <property type="entry name" value="Serpin_CS"/>
</dbReference>
<dbReference type="InterPro" id="IPR023796">
    <property type="entry name" value="Serpin_dom"/>
</dbReference>
<dbReference type="InterPro" id="IPR000215">
    <property type="entry name" value="Serpin_fam"/>
</dbReference>
<dbReference type="InterPro" id="IPR036186">
    <property type="entry name" value="Serpin_sf"/>
</dbReference>
<dbReference type="InterPro" id="IPR042178">
    <property type="entry name" value="Serpin_sf_1"/>
</dbReference>
<dbReference type="InterPro" id="IPR042185">
    <property type="entry name" value="Serpin_sf_2"/>
</dbReference>
<dbReference type="PANTHER" id="PTHR11461:SF50">
    <property type="entry name" value="NEUROSERPIN"/>
    <property type="match status" value="1"/>
</dbReference>
<dbReference type="PANTHER" id="PTHR11461">
    <property type="entry name" value="SERINE PROTEASE INHIBITOR, SERPIN"/>
    <property type="match status" value="1"/>
</dbReference>
<dbReference type="Pfam" id="PF00079">
    <property type="entry name" value="Serpin"/>
    <property type="match status" value="1"/>
</dbReference>
<dbReference type="SMART" id="SM00093">
    <property type="entry name" value="SERPIN"/>
    <property type="match status" value="1"/>
</dbReference>
<dbReference type="SUPFAM" id="SSF56574">
    <property type="entry name" value="Serpins"/>
    <property type="match status" value="1"/>
</dbReference>
<dbReference type="PROSITE" id="PS00284">
    <property type="entry name" value="SERPIN"/>
    <property type="match status" value="1"/>
</dbReference>
<organism>
    <name type="scientific">Mus musculus</name>
    <name type="common">Mouse</name>
    <dbReference type="NCBI Taxonomy" id="10090"/>
    <lineage>
        <taxon>Eukaryota</taxon>
        <taxon>Metazoa</taxon>
        <taxon>Chordata</taxon>
        <taxon>Craniata</taxon>
        <taxon>Vertebrata</taxon>
        <taxon>Euteleostomi</taxon>
        <taxon>Mammalia</taxon>
        <taxon>Eutheria</taxon>
        <taxon>Euarchontoglires</taxon>
        <taxon>Glires</taxon>
        <taxon>Rodentia</taxon>
        <taxon>Myomorpha</taxon>
        <taxon>Muroidea</taxon>
        <taxon>Muridae</taxon>
        <taxon>Murinae</taxon>
        <taxon>Mus</taxon>
        <taxon>Mus</taxon>
    </lineage>
</organism>
<proteinExistence type="evidence at protein level"/>
<feature type="signal peptide" evidence="3">
    <location>
        <begin position="1"/>
        <end position="16"/>
    </location>
</feature>
<feature type="chain" id="PRO_0000032522" description="Neuroserpin">
    <location>
        <begin position="17"/>
        <end position="410"/>
    </location>
</feature>
<feature type="site" description="Reactive bond" evidence="8">
    <location>
        <begin position="362"/>
        <end position="363"/>
    </location>
</feature>
<feature type="glycosylation site" description="N-linked (GlcNAc...) asparagine" evidence="3">
    <location>
        <position position="157"/>
    </location>
</feature>
<feature type="glycosylation site" description="N-linked (GlcNAc...) asparagine" evidence="3">
    <location>
        <position position="321"/>
    </location>
</feature>
<feature type="glycosylation site" description="N-linked (GlcNAc...) asparagine" evidence="3">
    <location>
        <position position="401"/>
    </location>
</feature>
<feature type="glycosylation site" description="O-linked (Xyl...) (chondroitin sulfate) serine" evidence="2">
    <location>
        <position position="403"/>
    </location>
</feature>
<feature type="sequence conflict" description="In Ref. 3; AAH06776." evidence="7" ref="3">
    <original>E</original>
    <variation>G</variation>
    <location>
        <position position="5"/>
    </location>
</feature>
<feature type="helix" evidence="9">
    <location>
        <begin position="26"/>
        <end position="33"/>
    </location>
</feature>
<feature type="turn" evidence="9">
    <location>
        <begin position="34"/>
        <end position="38"/>
    </location>
</feature>
<feature type="strand" evidence="9">
    <location>
        <begin position="39"/>
        <end position="41"/>
    </location>
</feature>
<feature type="strand" evidence="9">
    <location>
        <begin position="46"/>
        <end position="48"/>
    </location>
</feature>
<feature type="helix" evidence="9">
    <location>
        <begin position="50"/>
        <end position="60"/>
    </location>
</feature>
<feature type="strand" evidence="9">
    <location>
        <begin position="103"/>
        <end position="105"/>
    </location>
</feature>
<feature type="strand" evidence="9">
    <location>
        <begin position="108"/>
        <end position="117"/>
    </location>
</feature>
<feature type="helix" evidence="9">
    <location>
        <begin position="122"/>
        <end position="131"/>
    </location>
</feature>
<feature type="strand" evidence="9">
    <location>
        <begin position="136"/>
        <end position="139"/>
    </location>
</feature>
<feature type="helix" evidence="9">
    <location>
        <begin position="144"/>
        <end position="158"/>
    </location>
</feature>
<feature type="turn" evidence="9">
    <location>
        <begin position="169"/>
        <end position="171"/>
    </location>
</feature>
<feature type="strand" evidence="9">
    <location>
        <begin position="178"/>
        <end position="190"/>
    </location>
</feature>
<feature type="strand" evidence="9">
    <location>
        <begin position="200"/>
        <end position="204"/>
    </location>
</feature>
<feature type="strand" evidence="9">
    <location>
        <begin position="212"/>
        <end position="220"/>
    </location>
</feature>
<feature type="strand" evidence="9">
    <location>
        <begin position="224"/>
        <end position="229"/>
    </location>
</feature>
<feature type="strand" evidence="9">
    <location>
        <begin position="238"/>
        <end position="248"/>
    </location>
</feature>
<feature type="strand" evidence="9">
    <location>
        <begin position="251"/>
        <end position="257"/>
    </location>
</feature>
<feature type="helix" evidence="9">
    <location>
        <begin position="264"/>
        <end position="266"/>
    </location>
</feature>
<feature type="turn" evidence="9">
    <location>
        <begin position="267"/>
        <end position="270"/>
    </location>
</feature>
<feature type="helix" evidence="9">
    <location>
        <begin position="273"/>
        <end position="277"/>
    </location>
</feature>
<feature type="helix" evidence="9">
    <location>
        <begin position="279"/>
        <end position="281"/>
    </location>
</feature>
<feature type="strand" evidence="9">
    <location>
        <begin position="289"/>
        <end position="293"/>
    </location>
</feature>
<feature type="strand" evidence="9">
    <location>
        <begin position="296"/>
        <end position="299"/>
    </location>
</feature>
<feature type="helix" evidence="9">
    <location>
        <begin position="303"/>
        <end position="308"/>
    </location>
</feature>
<feature type="strand" evidence="9">
    <location>
        <begin position="334"/>
        <end position="343"/>
    </location>
</feature>
<feature type="strand" evidence="9">
    <location>
        <begin position="346"/>
        <end position="358"/>
    </location>
</feature>
<feature type="strand" evidence="9">
    <location>
        <begin position="369"/>
        <end position="371"/>
    </location>
</feature>
<feature type="strand" evidence="9">
    <location>
        <begin position="376"/>
        <end position="382"/>
    </location>
</feature>
<feature type="turn" evidence="9">
    <location>
        <begin position="383"/>
        <end position="385"/>
    </location>
</feature>
<feature type="strand" evidence="9">
    <location>
        <begin position="388"/>
        <end position="395"/>
    </location>
</feature>
<protein>
    <recommendedName>
        <fullName>Neuroserpin</fullName>
    </recommendedName>
    <alternativeName>
        <fullName>Peptidase inhibitor 12</fullName>
        <shortName>PI-12</shortName>
    </alternativeName>
    <alternativeName>
        <fullName>Serine protease inhibitor 17</fullName>
    </alternativeName>
    <alternativeName>
        <fullName>Serpin I1</fullName>
    </alternativeName>
</protein>
<keyword id="KW-0002">3D-structure</keyword>
<keyword id="KW-0968">Cytoplasmic vesicle</keyword>
<keyword id="KW-0325">Glycoprotein</keyword>
<keyword id="KW-0646">Protease inhibitor</keyword>
<keyword id="KW-0654">Proteoglycan</keyword>
<keyword id="KW-1185">Reference proteome</keyword>
<keyword id="KW-0964">Secreted</keyword>
<keyword id="KW-0722">Serine protease inhibitor</keyword>
<keyword id="KW-0732">Signal</keyword>
<gene>
    <name type="primary">Serpini1</name>
    <name type="synonym">Pi12</name>
    <name type="synonym">Spi17</name>
</gene>